<proteinExistence type="evidence at protein level"/>
<reference key="1">
    <citation type="journal article" date="2004" name="Nucleic Acids Res.">
        <title>Unique features revealed by the genome sequence of Acinetobacter sp. ADP1, a versatile and naturally transformation competent bacterium.</title>
        <authorList>
            <person name="Barbe V."/>
            <person name="Vallenet D."/>
            <person name="Fonknechten N."/>
            <person name="Kreimeyer A."/>
            <person name="Oztas S."/>
            <person name="Labarre L."/>
            <person name="Cruveiller S."/>
            <person name="Robert C."/>
            <person name="Duprat S."/>
            <person name="Wincker P."/>
            <person name="Ornston L.N."/>
            <person name="Weissenbach J."/>
            <person name="Marliere P."/>
            <person name="Cohen G.N."/>
            <person name="Medigue C."/>
        </authorList>
    </citation>
    <scope>NUCLEOTIDE SEQUENCE [LARGE SCALE GENOMIC DNA]</scope>
    <source>
        <strain evidence="6">ATCC 33305 / BD413 / ADP1</strain>
    </source>
</reference>
<reference key="2">
    <citation type="journal article" date="2018" name="Proc. Natl. Acad. Sci. U.S.A.">
        <title>Elucidation of the trigonelline degradation pathway reveals previously undescribed enzymes and metabolites.</title>
        <authorList>
            <person name="Perchat N."/>
            <person name="Saaidi P.L."/>
            <person name="Darii E."/>
            <person name="Pelle C."/>
            <person name="Petit J.L."/>
            <person name="Besnard-Gonnet M."/>
            <person name="de Berardinis V."/>
            <person name="Dupont M."/>
            <person name="Gimbernat A."/>
            <person name="Salanoubat M."/>
            <person name="Fischer C."/>
            <person name="Perret A."/>
        </authorList>
    </citation>
    <scope>FUNCTION</scope>
    <scope>CATALYTIC ACTIVITY</scope>
    <scope>BIOPHYSICOCHEMICAL PROPERTIES</scope>
    <scope>SUBUNIT</scope>
    <source>
        <strain>ATCC 33305 / BD413 / ADP1</strain>
    </source>
</reference>
<feature type="chain" id="PRO_0000445262" description="(Z)-2-((N-methylformamido)methylene)-5-hydroxybutyrolactone dehydrogenase">
    <location>
        <begin position="1"/>
        <end position="488"/>
    </location>
</feature>
<feature type="active site" description="Proton acceptor" evidence="1">
    <location>
        <position position="248"/>
    </location>
</feature>
<feature type="active site" description="Nucleophile" evidence="1">
    <location>
        <position position="282"/>
    </location>
</feature>
<feature type="binding site" evidence="1">
    <location>
        <begin position="149"/>
        <end position="150"/>
    </location>
    <ligand>
        <name>NAD(+)</name>
        <dbReference type="ChEBI" id="CHEBI:57540"/>
    </ligand>
</feature>
<feature type="binding site" evidence="1">
    <location>
        <begin position="226"/>
        <end position="227"/>
    </location>
    <ligand>
        <name>NAD(+)</name>
        <dbReference type="ChEBI" id="CHEBI:57540"/>
    </ligand>
</feature>
<feature type="binding site" evidence="1">
    <location>
        <position position="249"/>
    </location>
    <ligand>
        <name>NAD(+)</name>
        <dbReference type="ChEBI" id="CHEBI:57540"/>
    </ligand>
</feature>
<feature type="binding site" evidence="1">
    <location>
        <position position="380"/>
    </location>
    <ligand>
        <name>NAD(+)</name>
        <dbReference type="ChEBI" id="CHEBI:57540"/>
    </ligand>
</feature>
<accession>Q6F9F7</accession>
<comment type="function">
    <text evidence="2">Involved in the degradation of the pyridine ring of trigonelline (TG; N-methylnicotinate) into succinate and methylamine as carbon and nitrogen sources, respectively. Catalyzes the NAD(+)-dependent oxidation of (Z)-2-((N-methylformamido)methylene)-5-hydroxybutyrolactone (MFMB) to yield (E)-2-((N-methylformamido)methylene)succinate (MFMS).</text>
</comment>
<comment type="catalytic activity">
    <reaction evidence="2">
        <text>(Z)-2-((N-methylformamido)methylene)-5-hydroxybutanolactone + NAD(+) + H2O = (E)-2-((N-methylformamido) methylene)succinate + NADH + 3 H(+)</text>
        <dbReference type="Rhea" id="RHEA:56912"/>
        <dbReference type="ChEBI" id="CHEBI:15377"/>
        <dbReference type="ChEBI" id="CHEBI:15378"/>
        <dbReference type="ChEBI" id="CHEBI:57540"/>
        <dbReference type="ChEBI" id="CHEBI:57945"/>
        <dbReference type="ChEBI" id="CHEBI:141413"/>
        <dbReference type="ChEBI" id="CHEBI:141414"/>
    </reaction>
</comment>
<comment type="biophysicochemical properties">
    <kinetics>
        <KM evidence="2">140 uM for (Z)-2-((N-methylformamido)methylene)-5-hydroxybutyrolactone (MFMB)</KM>
        <KM evidence="2">900 uM for NAD</KM>
        <text evidence="2">kcat is 2.5 sec(-1) for NAD as substrate.</text>
    </kinetics>
</comment>
<comment type="subunit">
    <text evidence="2">Homodimer.</text>
</comment>
<comment type="similarity">
    <text evidence="4">Belongs to the aldehyde dehydrogenase family.</text>
</comment>
<gene>
    <name evidence="3" type="primary">tgnC</name>
    <name evidence="5" type="ordered locus">ACIAD2542</name>
</gene>
<sequence length="488" mass="52515">MQQFQLYINGKFEDGAAQFDSINPATGEIWAKMPEARTDQVNRAVDAAEQAFYDSSWSGLTASQRGKLLYKLADLVEKSAPRLAALETTDTGKIIRETSSQIAYVAEYYRYYAGLADKIEGSFIPVDKPDMQAWLVREPVGVVAAIVPWNSQLFLSAVKVGPALAAGCTVVLKASEEAPAPLLEFAKLIDEAGFPAGVVNVITGFGPECGAVLSAHPKVAHIAFTGGPETAKHIVRNSAENLAKVSLELGGKSPFIVFADTDINSALNAQIAAIFAATGQSCVAGSRLLIEESIKDEFLQRLAERVQSIKMGLPDDMQTEYGPLCTLKQREKIQQVVQRSVEQGAKLITGGQVCDGAGYYYPPTILDCSGVSDAQSIHTELFGPVLSVDTFSTEAEAIQKANSTPYGLASGVFTSNLTRAHRMTRAIRSGIVWLNTYRVVSPLAPFGGYGLSGHGREGGLSAALEYTTTKTVWLRMSDQPIDDPFVMR</sequence>
<organism>
    <name type="scientific">Acinetobacter baylyi (strain ATCC 33305 / BD413 / ADP1)</name>
    <dbReference type="NCBI Taxonomy" id="62977"/>
    <lineage>
        <taxon>Bacteria</taxon>
        <taxon>Pseudomonadati</taxon>
        <taxon>Pseudomonadota</taxon>
        <taxon>Gammaproteobacteria</taxon>
        <taxon>Moraxellales</taxon>
        <taxon>Moraxellaceae</taxon>
        <taxon>Acinetobacter</taxon>
    </lineage>
</organism>
<name>TGNC_ACIAD</name>
<keyword id="KW-0520">NAD</keyword>
<keyword id="KW-0560">Oxidoreductase</keyword>
<evidence type="ECO:0000250" key="1">
    <source>
        <dbReference type="UniProtKB" id="P25526"/>
    </source>
</evidence>
<evidence type="ECO:0000269" key="2">
    <source>
    </source>
</evidence>
<evidence type="ECO:0000303" key="3">
    <source>
    </source>
</evidence>
<evidence type="ECO:0000305" key="4"/>
<evidence type="ECO:0000312" key="5">
    <source>
        <dbReference type="EMBL" id="CAG69307.1"/>
    </source>
</evidence>
<evidence type="ECO:0000312" key="6">
    <source>
        <dbReference type="Proteomes" id="UP000000430"/>
    </source>
</evidence>
<protein>
    <recommendedName>
        <fullName evidence="3">(Z)-2-((N-methylformamido)methylene)-5-hydroxybutyrolactone dehydrogenase</fullName>
        <shortName evidence="3">MFMB dehydrogenase</shortName>
        <ecNumber evidence="2">1.2.1.-</ecNumber>
    </recommendedName>
</protein>
<dbReference type="EC" id="1.2.1.-" evidence="2"/>
<dbReference type="EMBL" id="CR543861">
    <property type="protein sequence ID" value="CAG69307.1"/>
    <property type="molecule type" value="Genomic_DNA"/>
</dbReference>
<dbReference type="RefSeq" id="WP_004928621.1">
    <property type="nucleotide sequence ID" value="NC_005966.1"/>
</dbReference>
<dbReference type="SMR" id="Q6F9F7"/>
<dbReference type="STRING" id="202950.GCA_001485005_01475"/>
<dbReference type="GeneID" id="45234826"/>
<dbReference type="KEGG" id="aci:ACIAD2542"/>
<dbReference type="eggNOG" id="COG1012">
    <property type="taxonomic scope" value="Bacteria"/>
</dbReference>
<dbReference type="HOGENOM" id="CLU_005391_0_2_6"/>
<dbReference type="OrthoDB" id="9812625at2"/>
<dbReference type="BioCyc" id="ASP62977:ACIAD_RS11545-MONOMER"/>
<dbReference type="SABIO-RK" id="Q6F9F7"/>
<dbReference type="Proteomes" id="UP000000430">
    <property type="component" value="Chromosome"/>
</dbReference>
<dbReference type="GO" id="GO:0016620">
    <property type="term" value="F:oxidoreductase activity, acting on the aldehyde or oxo group of donors, NAD or NADP as acceptor"/>
    <property type="evidence" value="ECO:0000314"/>
    <property type="project" value="UniProtKB"/>
</dbReference>
<dbReference type="CDD" id="cd07114">
    <property type="entry name" value="ALDH_DhaS"/>
    <property type="match status" value="1"/>
</dbReference>
<dbReference type="FunFam" id="3.40.309.10:FF:000012">
    <property type="entry name" value="Betaine aldehyde dehydrogenase"/>
    <property type="match status" value="1"/>
</dbReference>
<dbReference type="FunFam" id="3.40.605.10:FF:000007">
    <property type="entry name" value="NAD/NADP-dependent betaine aldehyde dehydrogenase"/>
    <property type="match status" value="1"/>
</dbReference>
<dbReference type="Gene3D" id="3.40.605.10">
    <property type="entry name" value="Aldehyde Dehydrogenase, Chain A, domain 1"/>
    <property type="match status" value="1"/>
</dbReference>
<dbReference type="Gene3D" id="3.40.309.10">
    <property type="entry name" value="Aldehyde Dehydrogenase, Chain A, domain 2"/>
    <property type="match status" value="1"/>
</dbReference>
<dbReference type="InterPro" id="IPR016161">
    <property type="entry name" value="Ald_DH/histidinol_DH"/>
</dbReference>
<dbReference type="InterPro" id="IPR016163">
    <property type="entry name" value="Ald_DH_C"/>
</dbReference>
<dbReference type="InterPro" id="IPR016160">
    <property type="entry name" value="Ald_DH_CS_CYS"/>
</dbReference>
<dbReference type="InterPro" id="IPR029510">
    <property type="entry name" value="Ald_DH_CS_GLU"/>
</dbReference>
<dbReference type="InterPro" id="IPR016162">
    <property type="entry name" value="Ald_DH_N"/>
</dbReference>
<dbReference type="InterPro" id="IPR015590">
    <property type="entry name" value="Aldehyde_DH_dom"/>
</dbReference>
<dbReference type="PANTHER" id="PTHR11699">
    <property type="entry name" value="ALDEHYDE DEHYDROGENASE-RELATED"/>
    <property type="match status" value="1"/>
</dbReference>
<dbReference type="Pfam" id="PF00171">
    <property type="entry name" value="Aldedh"/>
    <property type="match status" value="1"/>
</dbReference>
<dbReference type="SUPFAM" id="SSF53720">
    <property type="entry name" value="ALDH-like"/>
    <property type="match status" value="1"/>
</dbReference>
<dbReference type="PROSITE" id="PS00070">
    <property type="entry name" value="ALDEHYDE_DEHYDR_CYS"/>
    <property type="match status" value="1"/>
</dbReference>
<dbReference type="PROSITE" id="PS00687">
    <property type="entry name" value="ALDEHYDE_DEHYDR_GLU"/>
    <property type="match status" value="1"/>
</dbReference>